<evidence type="ECO:0000255" key="1">
    <source>
        <dbReference type="HAMAP-Rule" id="MF_00318"/>
    </source>
</evidence>
<gene>
    <name evidence="1" type="primary">eno</name>
    <name type="ordered locus">Bcer98_3678</name>
</gene>
<accession>A7GUR7</accession>
<comment type="function">
    <text evidence="1">Catalyzes the reversible conversion of 2-phosphoglycerate (2-PG) into phosphoenolpyruvate (PEP). It is essential for the degradation of carbohydrates via glycolysis.</text>
</comment>
<comment type="catalytic activity">
    <reaction evidence="1">
        <text>(2R)-2-phosphoglycerate = phosphoenolpyruvate + H2O</text>
        <dbReference type="Rhea" id="RHEA:10164"/>
        <dbReference type="ChEBI" id="CHEBI:15377"/>
        <dbReference type="ChEBI" id="CHEBI:58289"/>
        <dbReference type="ChEBI" id="CHEBI:58702"/>
        <dbReference type="EC" id="4.2.1.11"/>
    </reaction>
</comment>
<comment type="cofactor">
    <cofactor evidence="1">
        <name>Mg(2+)</name>
        <dbReference type="ChEBI" id="CHEBI:18420"/>
    </cofactor>
    <text evidence="1">Binds a second Mg(2+) ion via substrate during catalysis.</text>
</comment>
<comment type="pathway">
    <text evidence="1">Carbohydrate degradation; glycolysis; pyruvate from D-glyceraldehyde 3-phosphate: step 4/5.</text>
</comment>
<comment type="subcellular location">
    <subcellularLocation>
        <location evidence="1">Cytoplasm</location>
    </subcellularLocation>
    <subcellularLocation>
        <location evidence="1">Secreted</location>
    </subcellularLocation>
    <subcellularLocation>
        <location evidence="1">Cell surface</location>
    </subcellularLocation>
    <text evidence="1">Fractions of enolase are present in both the cytoplasm and on the cell surface.</text>
</comment>
<comment type="similarity">
    <text evidence="1">Belongs to the enolase family.</text>
</comment>
<name>ENO_BACCN</name>
<dbReference type="EC" id="4.2.1.11" evidence="1"/>
<dbReference type="EMBL" id="CP000764">
    <property type="protein sequence ID" value="ABS23875.1"/>
    <property type="molecule type" value="Genomic_DNA"/>
</dbReference>
<dbReference type="RefSeq" id="WP_012096132.1">
    <property type="nucleotide sequence ID" value="NC_009674.1"/>
</dbReference>
<dbReference type="SMR" id="A7GUR7"/>
<dbReference type="STRING" id="315749.Bcer98_3678"/>
<dbReference type="GeneID" id="33898925"/>
<dbReference type="KEGG" id="bcy:Bcer98_3678"/>
<dbReference type="eggNOG" id="COG0148">
    <property type="taxonomic scope" value="Bacteria"/>
</dbReference>
<dbReference type="HOGENOM" id="CLU_031223_2_1_9"/>
<dbReference type="OrthoDB" id="9804716at2"/>
<dbReference type="UniPathway" id="UPA00109">
    <property type="reaction ID" value="UER00187"/>
</dbReference>
<dbReference type="Proteomes" id="UP000002300">
    <property type="component" value="Chromosome"/>
</dbReference>
<dbReference type="GO" id="GO:0009986">
    <property type="term" value="C:cell surface"/>
    <property type="evidence" value="ECO:0007669"/>
    <property type="project" value="UniProtKB-SubCell"/>
</dbReference>
<dbReference type="GO" id="GO:0005576">
    <property type="term" value="C:extracellular region"/>
    <property type="evidence" value="ECO:0007669"/>
    <property type="project" value="UniProtKB-SubCell"/>
</dbReference>
<dbReference type="GO" id="GO:0000015">
    <property type="term" value="C:phosphopyruvate hydratase complex"/>
    <property type="evidence" value="ECO:0007669"/>
    <property type="project" value="InterPro"/>
</dbReference>
<dbReference type="GO" id="GO:0000287">
    <property type="term" value="F:magnesium ion binding"/>
    <property type="evidence" value="ECO:0007669"/>
    <property type="project" value="UniProtKB-UniRule"/>
</dbReference>
<dbReference type="GO" id="GO:0004634">
    <property type="term" value="F:phosphopyruvate hydratase activity"/>
    <property type="evidence" value="ECO:0007669"/>
    <property type="project" value="UniProtKB-UniRule"/>
</dbReference>
<dbReference type="GO" id="GO:0006096">
    <property type="term" value="P:glycolytic process"/>
    <property type="evidence" value="ECO:0007669"/>
    <property type="project" value="UniProtKB-UniRule"/>
</dbReference>
<dbReference type="CDD" id="cd03313">
    <property type="entry name" value="enolase"/>
    <property type="match status" value="1"/>
</dbReference>
<dbReference type="FunFam" id="3.20.20.120:FF:000001">
    <property type="entry name" value="Enolase"/>
    <property type="match status" value="1"/>
</dbReference>
<dbReference type="FunFam" id="3.30.390.10:FF:000001">
    <property type="entry name" value="Enolase"/>
    <property type="match status" value="1"/>
</dbReference>
<dbReference type="Gene3D" id="3.20.20.120">
    <property type="entry name" value="Enolase-like C-terminal domain"/>
    <property type="match status" value="1"/>
</dbReference>
<dbReference type="Gene3D" id="3.30.390.10">
    <property type="entry name" value="Enolase-like, N-terminal domain"/>
    <property type="match status" value="1"/>
</dbReference>
<dbReference type="HAMAP" id="MF_00318">
    <property type="entry name" value="Enolase"/>
    <property type="match status" value="1"/>
</dbReference>
<dbReference type="InterPro" id="IPR000941">
    <property type="entry name" value="Enolase"/>
</dbReference>
<dbReference type="InterPro" id="IPR036849">
    <property type="entry name" value="Enolase-like_C_sf"/>
</dbReference>
<dbReference type="InterPro" id="IPR029017">
    <property type="entry name" value="Enolase-like_N"/>
</dbReference>
<dbReference type="InterPro" id="IPR020810">
    <property type="entry name" value="Enolase_C"/>
</dbReference>
<dbReference type="InterPro" id="IPR020809">
    <property type="entry name" value="Enolase_CS"/>
</dbReference>
<dbReference type="InterPro" id="IPR020811">
    <property type="entry name" value="Enolase_N"/>
</dbReference>
<dbReference type="NCBIfam" id="TIGR01060">
    <property type="entry name" value="eno"/>
    <property type="match status" value="1"/>
</dbReference>
<dbReference type="PANTHER" id="PTHR11902">
    <property type="entry name" value="ENOLASE"/>
    <property type="match status" value="1"/>
</dbReference>
<dbReference type="PANTHER" id="PTHR11902:SF1">
    <property type="entry name" value="ENOLASE"/>
    <property type="match status" value="1"/>
</dbReference>
<dbReference type="Pfam" id="PF00113">
    <property type="entry name" value="Enolase_C"/>
    <property type="match status" value="1"/>
</dbReference>
<dbReference type="Pfam" id="PF03952">
    <property type="entry name" value="Enolase_N"/>
    <property type="match status" value="1"/>
</dbReference>
<dbReference type="PIRSF" id="PIRSF001400">
    <property type="entry name" value="Enolase"/>
    <property type="match status" value="1"/>
</dbReference>
<dbReference type="PRINTS" id="PR00148">
    <property type="entry name" value="ENOLASE"/>
</dbReference>
<dbReference type="SFLD" id="SFLDS00001">
    <property type="entry name" value="Enolase"/>
    <property type="match status" value="1"/>
</dbReference>
<dbReference type="SFLD" id="SFLDF00002">
    <property type="entry name" value="enolase"/>
    <property type="match status" value="1"/>
</dbReference>
<dbReference type="SMART" id="SM01192">
    <property type="entry name" value="Enolase_C"/>
    <property type="match status" value="1"/>
</dbReference>
<dbReference type="SMART" id="SM01193">
    <property type="entry name" value="Enolase_N"/>
    <property type="match status" value="1"/>
</dbReference>
<dbReference type="SUPFAM" id="SSF51604">
    <property type="entry name" value="Enolase C-terminal domain-like"/>
    <property type="match status" value="1"/>
</dbReference>
<dbReference type="SUPFAM" id="SSF54826">
    <property type="entry name" value="Enolase N-terminal domain-like"/>
    <property type="match status" value="1"/>
</dbReference>
<dbReference type="PROSITE" id="PS00164">
    <property type="entry name" value="ENOLASE"/>
    <property type="match status" value="1"/>
</dbReference>
<keyword id="KW-0963">Cytoplasm</keyword>
<keyword id="KW-0324">Glycolysis</keyword>
<keyword id="KW-0456">Lyase</keyword>
<keyword id="KW-0460">Magnesium</keyword>
<keyword id="KW-0479">Metal-binding</keyword>
<keyword id="KW-0964">Secreted</keyword>
<sequence length="430" mass="46401">MSTIIDVYAREVLDSRGNPTVEVEVYTEGGAFGRALVPSGASTGEYEAVELRDGDKSRYLGKGVLNAVKNVNEIIAPEIVGFDVTDQAGIDRAMIELDGTPNKGKLGANAILGVSMAVAHAAADFVGLPLYRYLGGFNAKQLPTPMMNIINGGSHADNNVDFQEFMILPVGAPTFKESIRMGAEVFHALKAVLHDKGLNTAVGDEGGFAPNLGSNREALEVIIEAIEKAGYKAGEDVFLGMDVASSEFYNKETGKYDLSGEGRSMTSAEMVDFYEELCKDFPIISIEDGLDENDWDGHKLLTERLGKKVQLVGDDLFVTNTKKLAEGIEKGISNSILIKVNQIGTLTETFEAIEMAKRAGYTAVVSHRSGETEDATIADIAVATNAGQIKTGSMSRTDRIAKYNQLLRIEDELGEIAVYDGLKSFYNLKK</sequence>
<proteinExistence type="inferred from homology"/>
<protein>
    <recommendedName>
        <fullName evidence="1">Enolase</fullName>
        <ecNumber evidence="1">4.2.1.11</ecNumber>
    </recommendedName>
    <alternativeName>
        <fullName evidence="1">2-phospho-D-glycerate hydro-lyase</fullName>
    </alternativeName>
    <alternativeName>
        <fullName evidence="1">2-phosphoglycerate dehydratase</fullName>
    </alternativeName>
</protein>
<feature type="chain" id="PRO_1000079121" description="Enolase">
    <location>
        <begin position="1"/>
        <end position="430"/>
    </location>
</feature>
<feature type="active site" description="Proton donor" evidence="1">
    <location>
        <position position="205"/>
    </location>
</feature>
<feature type="active site" description="Proton acceptor" evidence="1">
    <location>
        <position position="339"/>
    </location>
</feature>
<feature type="binding site" evidence="1">
    <location>
        <position position="163"/>
    </location>
    <ligand>
        <name>(2R)-2-phosphoglycerate</name>
        <dbReference type="ChEBI" id="CHEBI:58289"/>
    </ligand>
</feature>
<feature type="binding site" evidence="1">
    <location>
        <position position="242"/>
    </location>
    <ligand>
        <name>Mg(2+)</name>
        <dbReference type="ChEBI" id="CHEBI:18420"/>
    </ligand>
</feature>
<feature type="binding site" evidence="1">
    <location>
        <position position="287"/>
    </location>
    <ligand>
        <name>Mg(2+)</name>
        <dbReference type="ChEBI" id="CHEBI:18420"/>
    </ligand>
</feature>
<feature type="binding site" evidence="1">
    <location>
        <position position="314"/>
    </location>
    <ligand>
        <name>Mg(2+)</name>
        <dbReference type="ChEBI" id="CHEBI:18420"/>
    </ligand>
</feature>
<feature type="binding site" evidence="1">
    <location>
        <position position="339"/>
    </location>
    <ligand>
        <name>(2R)-2-phosphoglycerate</name>
        <dbReference type="ChEBI" id="CHEBI:58289"/>
    </ligand>
</feature>
<feature type="binding site" evidence="1">
    <location>
        <position position="368"/>
    </location>
    <ligand>
        <name>(2R)-2-phosphoglycerate</name>
        <dbReference type="ChEBI" id="CHEBI:58289"/>
    </ligand>
</feature>
<feature type="binding site" evidence="1">
    <location>
        <position position="369"/>
    </location>
    <ligand>
        <name>(2R)-2-phosphoglycerate</name>
        <dbReference type="ChEBI" id="CHEBI:58289"/>
    </ligand>
</feature>
<feature type="binding site" evidence="1">
    <location>
        <position position="390"/>
    </location>
    <ligand>
        <name>(2R)-2-phosphoglycerate</name>
        <dbReference type="ChEBI" id="CHEBI:58289"/>
    </ligand>
</feature>
<reference key="1">
    <citation type="journal article" date="2008" name="Chem. Biol. Interact.">
        <title>Extending the Bacillus cereus group genomics to putative food-borne pathogens of different toxicity.</title>
        <authorList>
            <person name="Lapidus A."/>
            <person name="Goltsman E."/>
            <person name="Auger S."/>
            <person name="Galleron N."/>
            <person name="Segurens B."/>
            <person name="Dossat C."/>
            <person name="Land M.L."/>
            <person name="Broussolle V."/>
            <person name="Brillard J."/>
            <person name="Guinebretiere M.-H."/>
            <person name="Sanchis V."/>
            <person name="Nguen-the C."/>
            <person name="Lereclus D."/>
            <person name="Richardson P."/>
            <person name="Wincker P."/>
            <person name="Weissenbach J."/>
            <person name="Ehrlich S.D."/>
            <person name="Sorokin A."/>
        </authorList>
    </citation>
    <scope>NUCLEOTIDE SEQUENCE [LARGE SCALE GENOMIC DNA]</scope>
    <source>
        <strain>DSM 22905 / CIP 110041 / 391-98 / NVH 391-98</strain>
    </source>
</reference>
<organism>
    <name type="scientific">Bacillus cytotoxicus (strain DSM 22905 / CIP 110041 / 391-98 / NVH 391-98)</name>
    <dbReference type="NCBI Taxonomy" id="315749"/>
    <lineage>
        <taxon>Bacteria</taxon>
        <taxon>Bacillati</taxon>
        <taxon>Bacillota</taxon>
        <taxon>Bacilli</taxon>
        <taxon>Bacillales</taxon>
        <taxon>Bacillaceae</taxon>
        <taxon>Bacillus</taxon>
        <taxon>Bacillus cereus group</taxon>
    </lineage>
</organism>